<dbReference type="EC" id="2.7.12.1"/>
<dbReference type="EMBL" id="AY364233">
    <property type="protein sequence ID" value="AAR13048.1"/>
    <property type="molecule type" value="mRNA"/>
</dbReference>
<dbReference type="EMBL" id="AY429679">
    <property type="protein sequence ID" value="AAS55395.1"/>
    <property type="molecule type" value="mRNA"/>
</dbReference>
<dbReference type="RefSeq" id="NP_001007477.1">
    <property type="nucleotide sequence ID" value="NM_001007476.1"/>
</dbReference>
<dbReference type="SMR" id="Q67E00"/>
<dbReference type="FunCoup" id="Q67E00">
    <property type="interactions" value="1169"/>
</dbReference>
<dbReference type="STRING" id="8364.ENSXETP00000031184"/>
<dbReference type="PaxDb" id="8364-ENSXETP00000001971"/>
<dbReference type="GeneID" id="493205"/>
<dbReference type="KEGG" id="xtr:493205"/>
<dbReference type="AGR" id="Xenbase:XB-GENE-971397"/>
<dbReference type="CTD" id="25778"/>
<dbReference type="Xenbase" id="XB-GENE-971397">
    <property type="gene designation" value="dstyk"/>
</dbReference>
<dbReference type="eggNOG" id="KOG0192">
    <property type="taxonomic scope" value="Eukaryota"/>
</dbReference>
<dbReference type="InParanoid" id="Q67E00"/>
<dbReference type="OMA" id="VTRMVWE"/>
<dbReference type="OrthoDB" id="122279at2759"/>
<dbReference type="Proteomes" id="UP000008143">
    <property type="component" value="Chromosome 2"/>
</dbReference>
<dbReference type="GO" id="GO:0070161">
    <property type="term" value="C:anchoring junction"/>
    <property type="evidence" value="ECO:0007669"/>
    <property type="project" value="UniProtKB-SubCell"/>
</dbReference>
<dbReference type="GO" id="GO:0016324">
    <property type="term" value="C:apical plasma membrane"/>
    <property type="evidence" value="ECO:0000250"/>
    <property type="project" value="UniProtKB"/>
</dbReference>
<dbReference type="GO" id="GO:0016323">
    <property type="term" value="C:basolateral plasma membrane"/>
    <property type="evidence" value="ECO:0000250"/>
    <property type="project" value="UniProtKB"/>
</dbReference>
<dbReference type="GO" id="GO:0005737">
    <property type="term" value="C:cytoplasm"/>
    <property type="evidence" value="ECO:0000250"/>
    <property type="project" value="UniProtKB"/>
</dbReference>
<dbReference type="GO" id="GO:0005524">
    <property type="term" value="F:ATP binding"/>
    <property type="evidence" value="ECO:0007669"/>
    <property type="project" value="UniProtKB-KW"/>
</dbReference>
<dbReference type="GO" id="GO:0106310">
    <property type="term" value="F:protein serine kinase activity"/>
    <property type="evidence" value="ECO:0007669"/>
    <property type="project" value="RHEA"/>
</dbReference>
<dbReference type="GO" id="GO:0004674">
    <property type="term" value="F:protein serine/threonine kinase activity"/>
    <property type="evidence" value="ECO:0007669"/>
    <property type="project" value="UniProtKB-KW"/>
</dbReference>
<dbReference type="GO" id="GO:0004712">
    <property type="term" value="F:protein serine/threonine/tyrosine kinase activity"/>
    <property type="evidence" value="ECO:0007669"/>
    <property type="project" value="UniProtKB-EC"/>
</dbReference>
<dbReference type="GO" id="GO:0004713">
    <property type="term" value="F:protein tyrosine kinase activity"/>
    <property type="evidence" value="ECO:0007669"/>
    <property type="project" value="UniProtKB-KW"/>
</dbReference>
<dbReference type="GO" id="GO:0048568">
    <property type="term" value="P:embryonic organ development"/>
    <property type="evidence" value="ECO:0000250"/>
    <property type="project" value="UniProtKB"/>
</dbReference>
<dbReference type="CDD" id="cd13975">
    <property type="entry name" value="PKc_Dusty"/>
    <property type="match status" value="1"/>
</dbReference>
<dbReference type="FunFam" id="1.10.510.10:FF:000244">
    <property type="entry name" value="Dual serine/threonine and tyrosine protein kinase"/>
    <property type="match status" value="1"/>
</dbReference>
<dbReference type="Gene3D" id="3.30.200.20">
    <property type="entry name" value="Phosphorylase Kinase, domain 1"/>
    <property type="match status" value="1"/>
</dbReference>
<dbReference type="Gene3D" id="1.10.510.10">
    <property type="entry name" value="Transferase(Phosphotransferase) domain 1"/>
    <property type="match status" value="1"/>
</dbReference>
<dbReference type="InterPro" id="IPR051302">
    <property type="entry name" value="Dual_SerThr-Tyr_Kinase"/>
</dbReference>
<dbReference type="InterPro" id="IPR011009">
    <property type="entry name" value="Kinase-like_dom_sf"/>
</dbReference>
<dbReference type="InterPro" id="IPR000719">
    <property type="entry name" value="Prot_kinase_dom"/>
</dbReference>
<dbReference type="InterPro" id="IPR017441">
    <property type="entry name" value="Protein_kinase_ATP_BS"/>
</dbReference>
<dbReference type="InterPro" id="IPR008271">
    <property type="entry name" value="Ser/Thr_kinase_AS"/>
</dbReference>
<dbReference type="PANTHER" id="PTHR46392">
    <property type="entry name" value="DUAL SERINE/THREONINE AND TYROSINE PROTEIN KINASE"/>
    <property type="match status" value="1"/>
</dbReference>
<dbReference type="PANTHER" id="PTHR46392:SF1">
    <property type="entry name" value="DUAL SERINE_THREONINE AND TYROSINE PROTEIN KINASE"/>
    <property type="match status" value="1"/>
</dbReference>
<dbReference type="Pfam" id="PF00069">
    <property type="entry name" value="Pkinase"/>
    <property type="match status" value="1"/>
</dbReference>
<dbReference type="SMART" id="SM00220">
    <property type="entry name" value="S_TKc"/>
    <property type="match status" value="1"/>
</dbReference>
<dbReference type="SUPFAM" id="SSF56112">
    <property type="entry name" value="Protein kinase-like (PK-like)"/>
    <property type="match status" value="1"/>
</dbReference>
<dbReference type="PROSITE" id="PS00107">
    <property type="entry name" value="PROTEIN_KINASE_ATP"/>
    <property type="match status" value="1"/>
</dbReference>
<dbReference type="PROSITE" id="PS50011">
    <property type="entry name" value="PROTEIN_KINASE_DOM"/>
    <property type="match status" value="1"/>
</dbReference>
<dbReference type="PROSITE" id="PS00108">
    <property type="entry name" value="PROTEIN_KINASE_ST"/>
    <property type="match status" value="1"/>
</dbReference>
<protein>
    <recommendedName>
        <fullName>Dual serine/threonine and tyrosine protein kinase</fullName>
        <ecNumber>2.7.12.1</ecNumber>
    </recommendedName>
    <alternativeName>
        <fullName>Dusty protein kinase</fullName>
        <shortName>Dusty PK</shortName>
    </alternativeName>
    <alternativeName>
        <fullName>Receptor-interacting serine/threonine-protein kinase 5</fullName>
    </alternativeName>
</protein>
<proteinExistence type="evidence at transcript level"/>
<organism>
    <name type="scientific">Xenopus tropicalis</name>
    <name type="common">Western clawed frog</name>
    <name type="synonym">Silurana tropicalis</name>
    <dbReference type="NCBI Taxonomy" id="8364"/>
    <lineage>
        <taxon>Eukaryota</taxon>
        <taxon>Metazoa</taxon>
        <taxon>Chordata</taxon>
        <taxon>Craniata</taxon>
        <taxon>Vertebrata</taxon>
        <taxon>Euteleostomi</taxon>
        <taxon>Amphibia</taxon>
        <taxon>Batrachia</taxon>
        <taxon>Anura</taxon>
        <taxon>Pipoidea</taxon>
        <taxon>Pipidae</taxon>
        <taxon>Xenopodinae</taxon>
        <taxon>Xenopus</taxon>
        <taxon>Silurana</taxon>
    </lineage>
</organism>
<keyword id="KW-0067">ATP-binding</keyword>
<keyword id="KW-0965">Cell junction</keyword>
<keyword id="KW-1003">Cell membrane</keyword>
<keyword id="KW-0963">Cytoplasm</keyword>
<keyword id="KW-0217">Developmental protein</keyword>
<keyword id="KW-0418">Kinase</keyword>
<keyword id="KW-0472">Membrane</keyword>
<keyword id="KW-0547">Nucleotide-binding</keyword>
<keyword id="KW-1185">Reference proteome</keyword>
<keyword id="KW-0723">Serine/threonine-protein kinase</keyword>
<keyword id="KW-0808">Transferase</keyword>
<keyword id="KW-0829">Tyrosine-protein kinase</keyword>
<sequence length="918" mass="104337">MQKDGTRSSRRMEEGDRRNGSTGSSGSVSRELGRGFSYYNKYLARLQQNLRDTKRFFRDIKHTYSGAPGGPDTDIKGAEGDLGQLHSITFPRQEEEYLKLTVRCRPCIFILGQSCSSRGRVANSLLGDQLLPILTHCGSECCKRRRIRFRYGKQTLVSLALPEQYELVHELVAHQGKWDTIPEEDLDVPEDEEDPAHRLAELEVTLPHQLLQDVDIVVSPCRSSQAVSMTLEDYVDHVQSIVVYAVCEERLSQQDEEELTEIKEKYKLPVFFIRTSSTRDRLIGGSEGVRSALYEQLMELGFLKRGLCNCGAAGSGSTAPSMLVEQFEKLRQVSTFSRQVLQMHLVDAAIVLNMVHSRCLDLFINKAFDMHRDLQITPKRLEYTRQKENELYESLMRISDRKQEELKDMIVETLNSMREQLLEDAANMQFKDIAIPQNGEPVSVQEVKCCIFQIKELIISRLNQAVVNKLISSVDYLRESFVGTLERCLRSLEKSQQESSSHVTSNHLKQILNAAYHVEVTFNSGSTVTRMVWEQIVQIIQRITWVSPPTITPEWKRRVAQDAIESLSASKLAKSICSQFCKRLKSSHEAFAASLKQLEVGHSGRLEKTNDLWLRVRKDHAPRLARLSLESRSLQDVLLHGKPRIGRELGRGQYGVVYLCDSWGGHFPCALKSVVPPDEKHWNDLALEFHYMRSLPKHERLVDLHGSVIDYSYGGGSSIAVLLITERLHRDLYVGLKTGLSLETRLQIALDVVEGIRFLHNQGLVHRDIKLKNVLLDKKHRAKITDLGFCKPEAMMSGSIVGTPIHMAPELFSGKYDNSVDVYAFGILFWYICSGSVKLPEAFEKCASKDHLWNNVRKGARPERLAIFDEECWKLMEACWNGDPSQRPLMGIVQPMLQGIMDRLCRAQETGKALEDST</sequence>
<feature type="chain" id="PRO_0000233126" description="Dual serine/threonine and tyrosine protein kinase">
    <location>
        <begin position="1"/>
        <end position="918"/>
    </location>
</feature>
<feature type="domain" description="Protein kinase" evidence="4">
    <location>
        <begin position="643"/>
        <end position="897"/>
    </location>
</feature>
<feature type="region of interest" description="Disordered" evidence="6">
    <location>
        <begin position="1"/>
        <end position="29"/>
    </location>
</feature>
<feature type="compositionally biased region" description="Basic and acidic residues" evidence="6">
    <location>
        <begin position="1"/>
        <end position="19"/>
    </location>
</feature>
<feature type="active site" description="Proton acceptor" evidence="4 5">
    <location>
        <position position="768"/>
    </location>
</feature>
<feature type="binding site" evidence="4">
    <location>
        <begin position="649"/>
        <end position="657"/>
    </location>
    <ligand>
        <name>ATP</name>
        <dbReference type="ChEBI" id="CHEBI:30616"/>
    </ligand>
</feature>
<feature type="binding site" evidence="4">
    <location>
        <position position="672"/>
    </location>
    <ligand>
        <name>ATP</name>
        <dbReference type="ChEBI" id="CHEBI:30616"/>
    </ligand>
</feature>
<reference key="1">
    <citation type="journal article" date="2006" name="Biochim. Biophys. Acta">
        <title>Dusty protein kinases: primary structure, gene evolution, tissue specific expression and unique features of the catalytic domain.</title>
        <authorList>
            <person name="Peng J."/>
            <person name="Dong W."/>
            <person name="Chen Y."/>
            <person name="Mo R."/>
            <person name="Cheng J.-F."/>
            <person name="Hui C.-C."/>
            <person name="Mohandas N."/>
            <person name="Huang C.-H."/>
        </authorList>
    </citation>
    <scope>NUCLEOTIDE SEQUENCE [MRNA]</scope>
    <source>
        <tissue>Brain</tissue>
    </source>
</reference>
<accession>Q67E00</accession>
<evidence type="ECO:0000250" key="1">
    <source>
        <dbReference type="UniProtKB" id="Q4VSN1"/>
    </source>
</evidence>
<evidence type="ECO:0000250" key="2">
    <source>
        <dbReference type="UniProtKB" id="Q6XUX1"/>
    </source>
</evidence>
<evidence type="ECO:0000250" key="3">
    <source>
        <dbReference type="UniProtKB" id="Q6XUX3"/>
    </source>
</evidence>
<evidence type="ECO:0000255" key="4">
    <source>
        <dbReference type="PROSITE-ProRule" id="PRU00159"/>
    </source>
</evidence>
<evidence type="ECO:0000255" key="5">
    <source>
        <dbReference type="PROSITE-ProRule" id="PRU10027"/>
    </source>
</evidence>
<evidence type="ECO:0000256" key="6">
    <source>
        <dbReference type="SAM" id="MobiDB-lite"/>
    </source>
</evidence>
<gene>
    <name type="primary">dstyk</name>
    <name type="synonym">ripk5</name>
</gene>
<name>DUSTY_XENTR</name>
<comment type="function">
    <text evidence="1 3">May act as a positive regulator of ERK phosphorylation downstream of fibroblast growth factor-receptor activation. May induce both caspase-dependent apoptosis and caspase-independent cell death. May play a role in the embryonic development.</text>
</comment>
<comment type="catalytic activity">
    <reaction>
        <text>L-seryl-[protein] + ATP = O-phospho-L-seryl-[protein] + ADP + H(+)</text>
        <dbReference type="Rhea" id="RHEA:17989"/>
        <dbReference type="Rhea" id="RHEA-COMP:9863"/>
        <dbReference type="Rhea" id="RHEA-COMP:11604"/>
        <dbReference type="ChEBI" id="CHEBI:15378"/>
        <dbReference type="ChEBI" id="CHEBI:29999"/>
        <dbReference type="ChEBI" id="CHEBI:30616"/>
        <dbReference type="ChEBI" id="CHEBI:83421"/>
        <dbReference type="ChEBI" id="CHEBI:456216"/>
        <dbReference type="EC" id="2.7.12.1"/>
    </reaction>
</comment>
<comment type="catalytic activity">
    <reaction>
        <text>L-threonyl-[protein] + ATP = O-phospho-L-threonyl-[protein] + ADP + H(+)</text>
        <dbReference type="Rhea" id="RHEA:46608"/>
        <dbReference type="Rhea" id="RHEA-COMP:11060"/>
        <dbReference type="Rhea" id="RHEA-COMP:11605"/>
        <dbReference type="ChEBI" id="CHEBI:15378"/>
        <dbReference type="ChEBI" id="CHEBI:30013"/>
        <dbReference type="ChEBI" id="CHEBI:30616"/>
        <dbReference type="ChEBI" id="CHEBI:61977"/>
        <dbReference type="ChEBI" id="CHEBI:456216"/>
        <dbReference type="EC" id="2.7.12.1"/>
    </reaction>
</comment>
<comment type="catalytic activity">
    <reaction>
        <text>L-tyrosyl-[protein] + ATP = O-phospho-L-tyrosyl-[protein] + ADP + H(+)</text>
        <dbReference type="Rhea" id="RHEA:10596"/>
        <dbReference type="Rhea" id="RHEA-COMP:10136"/>
        <dbReference type="Rhea" id="RHEA-COMP:20101"/>
        <dbReference type="ChEBI" id="CHEBI:15378"/>
        <dbReference type="ChEBI" id="CHEBI:30616"/>
        <dbReference type="ChEBI" id="CHEBI:46858"/>
        <dbReference type="ChEBI" id="CHEBI:61978"/>
        <dbReference type="ChEBI" id="CHEBI:456216"/>
        <dbReference type="EC" id="2.7.12.1"/>
    </reaction>
</comment>
<comment type="subcellular location">
    <subcellularLocation>
        <location evidence="2">Cytoplasm</location>
    </subcellularLocation>
    <subcellularLocation>
        <location evidence="2">Cell membrane</location>
    </subcellularLocation>
    <subcellularLocation>
        <location evidence="2">Apical cell membrane</location>
    </subcellularLocation>
    <subcellularLocation>
        <location evidence="2">Basolateral cell membrane</location>
    </subcellularLocation>
    <subcellularLocation>
        <location evidence="2">Cell junction</location>
    </subcellularLocation>
</comment>
<comment type="similarity">
    <text evidence="4">Belongs to the protein kinase superfamily. Ser/Thr protein kinase family.</text>
</comment>